<reference key="1">
    <citation type="journal article" date="2005" name="Nature">
        <title>The map-based sequence of the rice genome.</title>
        <authorList>
            <consortium name="International rice genome sequencing project (IRGSP)"/>
        </authorList>
    </citation>
    <scope>NUCLEOTIDE SEQUENCE [LARGE SCALE GENOMIC DNA]</scope>
    <source>
        <strain>cv. Nipponbare</strain>
    </source>
</reference>
<reference key="2">
    <citation type="journal article" date="2008" name="Nucleic Acids Res.">
        <title>The rice annotation project database (RAP-DB): 2008 update.</title>
        <authorList>
            <consortium name="The rice annotation project (RAP)"/>
        </authorList>
    </citation>
    <scope>GENOME REANNOTATION</scope>
    <source>
        <strain>cv. Nipponbare</strain>
    </source>
</reference>
<reference key="3">
    <citation type="journal article" date="2013" name="Rice">
        <title>Improvement of the Oryza sativa Nipponbare reference genome using next generation sequence and optical map data.</title>
        <authorList>
            <person name="Kawahara Y."/>
            <person name="de la Bastide M."/>
            <person name="Hamilton J.P."/>
            <person name="Kanamori H."/>
            <person name="McCombie W.R."/>
            <person name="Ouyang S."/>
            <person name="Schwartz D.C."/>
            <person name="Tanaka T."/>
            <person name="Wu J."/>
            <person name="Zhou S."/>
            <person name="Childs K.L."/>
            <person name="Davidson R.M."/>
            <person name="Lin H."/>
            <person name="Quesada-Ocampo L."/>
            <person name="Vaillancourt B."/>
            <person name="Sakai H."/>
            <person name="Lee S.S."/>
            <person name="Kim J."/>
            <person name="Numa H."/>
            <person name="Itoh T."/>
            <person name="Buell C.R."/>
            <person name="Matsumoto T."/>
        </authorList>
    </citation>
    <scope>GENOME REANNOTATION</scope>
    <source>
        <strain>cv. Nipponbare</strain>
    </source>
</reference>
<reference key="4">
    <citation type="journal article" date="2005" name="PLoS Biol.">
        <title>The genomes of Oryza sativa: a history of duplications.</title>
        <authorList>
            <person name="Yu J."/>
            <person name="Wang J."/>
            <person name="Lin W."/>
            <person name="Li S."/>
            <person name="Li H."/>
            <person name="Zhou J."/>
            <person name="Ni P."/>
            <person name="Dong W."/>
            <person name="Hu S."/>
            <person name="Zeng C."/>
            <person name="Zhang J."/>
            <person name="Zhang Y."/>
            <person name="Li R."/>
            <person name="Xu Z."/>
            <person name="Li S."/>
            <person name="Li X."/>
            <person name="Zheng H."/>
            <person name="Cong L."/>
            <person name="Lin L."/>
            <person name="Yin J."/>
            <person name="Geng J."/>
            <person name="Li G."/>
            <person name="Shi J."/>
            <person name="Liu J."/>
            <person name="Lv H."/>
            <person name="Li J."/>
            <person name="Wang J."/>
            <person name="Deng Y."/>
            <person name="Ran L."/>
            <person name="Shi X."/>
            <person name="Wang X."/>
            <person name="Wu Q."/>
            <person name="Li C."/>
            <person name="Ren X."/>
            <person name="Wang J."/>
            <person name="Wang X."/>
            <person name="Li D."/>
            <person name="Liu D."/>
            <person name="Zhang X."/>
            <person name="Ji Z."/>
            <person name="Zhao W."/>
            <person name="Sun Y."/>
            <person name="Zhang Z."/>
            <person name="Bao J."/>
            <person name="Han Y."/>
            <person name="Dong L."/>
            <person name="Ji J."/>
            <person name="Chen P."/>
            <person name="Wu S."/>
            <person name="Liu J."/>
            <person name="Xiao Y."/>
            <person name="Bu D."/>
            <person name="Tan J."/>
            <person name="Yang L."/>
            <person name="Ye C."/>
            <person name="Zhang J."/>
            <person name="Xu J."/>
            <person name="Zhou Y."/>
            <person name="Yu Y."/>
            <person name="Zhang B."/>
            <person name="Zhuang S."/>
            <person name="Wei H."/>
            <person name="Liu B."/>
            <person name="Lei M."/>
            <person name="Yu H."/>
            <person name="Li Y."/>
            <person name="Xu H."/>
            <person name="Wei S."/>
            <person name="He X."/>
            <person name="Fang L."/>
            <person name="Zhang Z."/>
            <person name="Zhang Y."/>
            <person name="Huang X."/>
            <person name="Su Z."/>
            <person name="Tong W."/>
            <person name="Li J."/>
            <person name="Tong Z."/>
            <person name="Li S."/>
            <person name="Ye J."/>
            <person name="Wang L."/>
            <person name="Fang L."/>
            <person name="Lei T."/>
            <person name="Chen C.-S."/>
            <person name="Chen H.-C."/>
            <person name="Xu Z."/>
            <person name="Li H."/>
            <person name="Huang H."/>
            <person name="Zhang F."/>
            <person name="Xu H."/>
            <person name="Li N."/>
            <person name="Zhao C."/>
            <person name="Li S."/>
            <person name="Dong L."/>
            <person name="Huang Y."/>
            <person name="Li L."/>
            <person name="Xi Y."/>
            <person name="Qi Q."/>
            <person name="Li W."/>
            <person name="Zhang B."/>
            <person name="Hu W."/>
            <person name="Zhang Y."/>
            <person name="Tian X."/>
            <person name="Jiao Y."/>
            <person name="Liang X."/>
            <person name="Jin J."/>
            <person name="Gao L."/>
            <person name="Zheng W."/>
            <person name="Hao B."/>
            <person name="Liu S.-M."/>
            <person name="Wang W."/>
            <person name="Yuan L."/>
            <person name="Cao M."/>
            <person name="McDermott J."/>
            <person name="Samudrala R."/>
            <person name="Wang J."/>
            <person name="Wong G.K.-S."/>
            <person name="Yang H."/>
        </authorList>
    </citation>
    <scope>NUCLEOTIDE SEQUENCE [LARGE SCALE GENOMIC DNA]</scope>
    <source>
        <strain>cv. Nipponbare</strain>
    </source>
</reference>
<reference key="5">
    <citation type="journal article" date="2003" name="Science">
        <title>Collection, mapping, and annotation of over 28,000 cDNA clones from japonica rice.</title>
        <authorList>
            <consortium name="The rice full-length cDNA consortium"/>
        </authorList>
    </citation>
    <scope>NUCLEOTIDE SEQUENCE [LARGE SCALE MRNA]</scope>
    <source>
        <strain>cv. Nipponbare</strain>
    </source>
</reference>
<reference key="6">
    <citation type="journal article" date="2000" name="Mol. Gen. Genet.">
        <title>HD-Zip proteins of families I and II from rice: interactions and functional properties.</title>
        <authorList>
            <person name="Meijer A.H."/>
            <person name="de Kam R.J."/>
            <person name="d'Erfurth I."/>
            <person name="Shen W.-B."/>
            <person name="Hoge J.H.C."/>
        </authorList>
    </citation>
    <scope>FUNCTION</scope>
    <scope>SUBUNIT</scope>
    <scope>TISSUE SPECIFICITY</scope>
</reference>
<reference key="7">
    <citation type="journal article" date="2008" name="Plant Mol. Biol.">
        <title>A genome-wide survey of HD-Zip genes in rice and analysis of drought-responsive family members.</title>
        <authorList>
            <person name="Agalou A."/>
            <person name="Purwantomo S."/>
            <person name="Oevernaes E."/>
            <person name="Johannesson H."/>
            <person name="Zhu X."/>
            <person name="Estiati A."/>
            <person name="de Kam R.J."/>
            <person name="Engstroem P."/>
            <person name="Slamet-Loedin I.H."/>
            <person name="Zhu Z."/>
            <person name="Wang M."/>
            <person name="Xiong L."/>
            <person name="Meijer A.H."/>
            <person name="Ouwerkerk P.B.F."/>
        </authorList>
    </citation>
    <scope>TISSUE SPECIFICITY</scope>
    <scope>GENE FAMILY</scope>
    <scope>NOMENCLATURE</scope>
</reference>
<keyword id="KW-0238">DNA-binding</keyword>
<keyword id="KW-0371">Homeobox</keyword>
<keyword id="KW-0539">Nucleus</keyword>
<keyword id="KW-1185">Reference proteome</keyword>
<keyword id="KW-0804">Transcription</keyword>
<keyword id="KW-0805">Transcription regulation</keyword>
<feature type="chain" id="PRO_0000331677" description="Homeobox-leucine zipper protein HOX2">
    <location>
        <begin position="1"/>
        <end position="308"/>
    </location>
</feature>
<feature type="DNA-binding region" description="Homeobox" evidence="1">
    <location>
        <begin position="112"/>
        <end position="171"/>
    </location>
</feature>
<feature type="region of interest" description="Disordered" evidence="2">
    <location>
        <begin position="15"/>
        <end position="36"/>
    </location>
</feature>
<feature type="region of interest" description="Disordered" evidence="2">
    <location>
        <begin position="71"/>
        <end position="117"/>
    </location>
</feature>
<feature type="region of interest" description="Leucine-zipper">
    <location>
        <begin position="170"/>
        <end position="214"/>
    </location>
</feature>
<feature type="compositionally biased region" description="Low complexity" evidence="2">
    <location>
        <begin position="74"/>
        <end position="88"/>
    </location>
</feature>
<organism>
    <name type="scientific">Oryza sativa subsp. japonica</name>
    <name type="common">Rice</name>
    <dbReference type="NCBI Taxonomy" id="39947"/>
    <lineage>
        <taxon>Eukaryota</taxon>
        <taxon>Viridiplantae</taxon>
        <taxon>Streptophyta</taxon>
        <taxon>Embryophyta</taxon>
        <taxon>Tracheophyta</taxon>
        <taxon>Spermatophyta</taxon>
        <taxon>Magnoliopsida</taxon>
        <taxon>Liliopsida</taxon>
        <taxon>Poales</taxon>
        <taxon>Poaceae</taxon>
        <taxon>BOP clade</taxon>
        <taxon>Oryzoideae</taxon>
        <taxon>Oryzeae</taxon>
        <taxon>Oryzinae</taxon>
        <taxon>Oryza</taxon>
        <taxon>Oryza sativa</taxon>
    </lineage>
</organism>
<comment type="function">
    <text evidence="3">Probable transcription factor that binds to the DNA sequence 5'-CAAT[GC]ATTG-3'.</text>
</comment>
<comment type="subunit">
    <text evidence="3 5">Homodimer (Probable). May form a heterodimer with HOX1, HOX3 or HOX7.</text>
</comment>
<comment type="subcellular location">
    <subcellularLocation>
        <location evidence="5">Nucleus</location>
    </subcellularLocation>
</comment>
<comment type="tissue specificity">
    <text evidence="3 4">Expressed in seedlings, roots, leaves, nodes, internodes, flowers and embryo.</text>
</comment>
<comment type="similarity">
    <text evidence="5">Belongs to the HD-ZIP homeobox family. Class II subfamily.</text>
</comment>
<proteinExistence type="evidence at protein level"/>
<protein>
    <recommendedName>
        <fullName>Homeobox-leucine zipper protein HOX2</fullName>
    </recommendedName>
    <alternativeName>
        <fullName>HD-ZIP protein HOX2</fullName>
    </alternativeName>
    <alternativeName>
        <fullName>Homeodomain transcription factor HOX2</fullName>
    </alternativeName>
    <alternativeName>
        <fullName>OsHox2</fullName>
    </alternativeName>
</protein>
<accession>Q5VPE3</accession>
<accession>A3B889</accession>
<accession>B7EXL8</accession>
<evidence type="ECO:0000255" key="1">
    <source>
        <dbReference type="PROSITE-ProRule" id="PRU00108"/>
    </source>
</evidence>
<evidence type="ECO:0000256" key="2">
    <source>
        <dbReference type="SAM" id="MobiDB-lite"/>
    </source>
</evidence>
<evidence type="ECO:0000269" key="3">
    <source>
    </source>
</evidence>
<evidence type="ECO:0000269" key="4">
    <source>
    </source>
</evidence>
<evidence type="ECO:0000305" key="5"/>
<evidence type="ECO:0000312" key="6">
    <source>
        <dbReference type="EMBL" id="EEE65059.1"/>
    </source>
</evidence>
<dbReference type="EMBL" id="AP003708">
    <property type="protein sequence ID" value="BAD68682.1"/>
    <property type="molecule type" value="Genomic_DNA"/>
</dbReference>
<dbReference type="EMBL" id="AP008212">
    <property type="protein sequence ID" value="BAF18667.1"/>
    <property type="molecule type" value="Genomic_DNA"/>
</dbReference>
<dbReference type="EMBL" id="AP014962">
    <property type="protein sequence ID" value="BAS96077.1"/>
    <property type="molecule type" value="Genomic_DNA"/>
</dbReference>
<dbReference type="EMBL" id="CM000143">
    <property type="protein sequence ID" value="EEE65059.1"/>
    <property type="molecule type" value="Genomic_DNA"/>
</dbReference>
<dbReference type="EMBL" id="AK105150">
    <property type="protein sequence ID" value="BAG97115.1"/>
    <property type="molecule type" value="mRNA"/>
</dbReference>
<dbReference type="RefSeq" id="XP_015641839.1">
    <property type="nucleotide sequence ID" value="XM_015786353.1"/>
</dbReference>
<dbReference type="SMR" id="Q5VPE3"/>
<dbReference type="FunCoup" id="Q5VPE3">
    <property type="interactions" value="1"/>
</dbReference>
<dbReference type="PaxDb" id="39947-Q5VPE3"/>
<dbReference type="EnsemblPlants" id="Os06t0140700-01">
    <property type="protein sequence ID" value="Os06t0140700-01"/>
    <property type="gene ID" value="Os06g0140700"/>
</dbReference>
<dbReference type="Gramene" id="Os06t0140700-01">
    <property type="protein sequence ID" value="Os06t0140700-01"/>
    <property type="gene ID" value="Os06g0140700"/>
</dbReference>
<dbReference type="KEGG" id="dosa:Os06g0140700"/>
<dbReference type="eggNOG" id="KOG0483">
    <property type="taxonomic scope" value="Eukaryota"/>
</dbReference>
<dbReference type="HOGENOM" id="CLU_049516_4_0_1"/>
<dbReference type="InParanoid" id="Q5VPE3"/>
<dbReference type="OMA" id="QQQCHPK"/>
<dbReference type="OrthoDB" id="6159439at2759"/>
<dbReference type="Proteomes" id="UP000000763">
    <property type="component" value="Chromosome 6"/>
</dbReference>
<dbReference type="Proteomes" id="UP000007752">
    <property type="component" value="Chromosome 6"/>
</dbReference>
<dbReference type="Proteomes" id="UP000059680">
    <property type="component" value="Chromosome 6"/>
</dbReference>
<dbReference type="GO" id="GO:0005634">
    <property type="term" value="C:nucleus"/>
    <property type="evidence" value="ECO:0007669"/>
    <property type="project" value="UniProtKB-SubCell"/>
</dbReference>
<dbReference type="GO" id="GO:0000981">
    <property type="term" value="F:DNA-binding transcription factor activity, RNA polymerase II-specific"/>
    <property type="evidence" value="ECO:0007669"/>
    <property type="project" value="InterPro"/>
</dbReference>
<dbReference type="GO" id="GO:0043565">
    <property type="term" value="F:sequence-specific DNA binding"/>
    <property type="evidence" value="ECO:0007669"/>
    <property type="project" value="InterPro"/>
</dbReference>
<dbReference type="CDD" id="cd00086">
    <property type="entry name" value="homeodomain"/>
    <property type="match status" value="1"/>
</dbReference>
<dbReference type="FunFam" id="1.10.10.60:FF:000577">
    <property type="entry name" value="Homeobox-leucine zipper protein 18"/>
    <property type="match status" value="1"/>
</dbReference>
<dbReference type="Gene3D" id="1.10.10.60">
    <property type="entry name" value="Homeodomain-like"/>
    <property type="match status" value="1"/>
</dbReference>
<dbReference type="InterPro" id="IPR001356">
    <property type="entry name" value="HD"/>
</dbReference>
<dbReference type="InterPro" id="IPR050762">
    <property type="entry name" value="HD-ZIP_Homeobox_LZ_Class_II"/>
</dbReference>
<dbReference type="InterPro" id="IPR017970">
    <property type="entry name" value="Homeobox_CS"/>
</dbReference>
<dbReference type="InterPro" id="IPR009057">
    <property type="entry name" value="Homeodomain-like_sf"/>
</dbReference>
<dbReference type="InterPro" id="IPR000047">
    <property type="entry name" value="HTH_motif"/>
</dbReference>
<dbReference type="InterPro" id="IPR003106">
    <property type="entry name" value="Leu_zip_homeo"/>
</dbReference>
<dbReference type="PANTHER" id="PTHR45714">
    <property type="entry name" value="HOMEOBOX-LEUCINE ZIPPER PROTEIN HAT14"/>
    <property type="match status" value="1"/>
</dbReference>
<dbReference type="PANTHER" id="PTHR45714:SF7">
    <property type="entry name" value="HOMEOBOX-LEUCINE ZIPPER PROTEIN HOX2"/>
    <property type="match status" value="1"/>
</dbReference>
<dbReference type="Pfam" id="PF02183">
    <property type="entry name" value="HALZ"/>
    <property type="match status" value="1"/>
</dbReference>
<dbReference type="Pfam" id="PF00046">
    <property type="entry name" value="Homeodomain"/>
    <property type="match status" value="1"/>
</dbReference>
<dbReference type="PRINTS" id="PR00031">
    <property type="entry name" value="HTHREPRESSR"/>
</dbReference>
<dbReference type="SMART" id="SM00340">
    <property type="entry name" value="HALZ"/>
    <property type="match status" value="1"/>
</dbReference>
<dbReference type="SMART" id="SM00389">
    <property type="entry name" value="HOX"/>
    <property type="match status" value="1"/>
</dbReference>
<dbReference type="SUPFAM" id="SSF46689">
    <property type="entry name" value="Homeodomain-like"/>
    <property type="match status" value="1"/>
</dbReference>
<dbReference type="PROSITE" id="PS00027">
    <property type="entry name" value="HOMEOBOX_1"/>
    <property type="match status" value="1"/>
</dbReference>
<dbReference type="PROSITE" id="PS50071">
    <property type="entry name" value="HOMEOBOX_2"/>
    <property type="match status" value="1"/>
</dbReference>
<sequence>MMDLGLSLGLGLASQGSLTSSTTTTSSPGAGSSSPWAAALNSIVGDVRRDQAAAHAAAAVGVGVGGEEMYQGRASTSPDSAAALSSASGKRERELERSGSGVDDDDGADGAGGRKKLRLSKDQAAVLEECFKTHSTLNPKQKVALANRLGLRPRQVEVWFQNRRARTKLKQTEVDCEYLKRWCERLADENKRLEKELADLRALKAAPSPASASAMQPSSSAAATLTMCPSCRRVATAGAPHQPNHQQCHPKSNTTISSSSTAAAAVAVAGGNVLPSHCQFFPAAAAAADRTSQSTWNAAAPLVTRELF</sequence>
<name>HOX2_ORYSJ</name>
<gene>
    <name type="primary">HOX2</name>
    <name type="ordered locus">Os06g0140700</name>
    <name type="ordered locus">LOC_Os06g04870</name>
    <name type="ORF">OsJ_019261</name>
    <name evidence="6" type="ORF">OsJ_20069</name>
    <name type="ORF">OSJNBa0041F13.48</name>
</gene>